<dbReference type="EMBL" id="BC114733">
    <property type="protein sequence ID" value="AAI14734.1"/>
    <property type="molecule type" value="mRNA"/>
</dbReference>
<dbReference type="RefSeq" id="NP_001069679.1">
    <property type="nucleotide sequence ID" value="NM_001076211.1"/>
</dbReference>
<dbReference type="SMR" id="Q1RMS8"/>
<dbReference type="FunCoup" id="Q1RMS8">
    <property type="interactions" value="2613"/>
</dbReference>
<dbReference type="STRING" id="9913.ENSBTAP00000068225"/>
<dbReference type="PaxDb" id="9913-ENSBTAP00000009259"/>
<dbReference type="GeneID" id="540328"/>
<dbReference type="KEGG" id="bta:540328"/>
<dbReference type="CTD" id="26260"/>
<dbReference type="VEuPathDB" id="HostDB:ENSBTAG00000007039"/>
<dbReference type="eggNOG" id="KOG3926">
    <property type="taxonomic scope" value="Eukaryota"/>
</dbReference>
<dbReference type="HOGENOM" id="CLU_065667_0_0_1"/>
<dbReference type="InParanoid" id="Q1RMS8"/>
<dbReference type="OrthoDB" id="9991467at2759"/>
<dbReference type="TreeFam" id="TF313070"/>
<dbReference type="UniPathway" id="UPA00143"/>
<dbReference type="Proteomes" id="UP000009136">
    <property type="component" value="Chromosome 1"/>
</dbReference>
<dbReference type="Bgee" id="ENSBTAG00000007039">
    <property type="expression patterns" value="Expressed in adenohypophysis and 104 other cell types or tissues"/>
</dbReference>
<dbReference type="GO" id="GO:0005737">
    <property type="term" value="C:cytoplasm"/>
    <property type="evidence" value="ECO:0000318"/>
    <property type="project" value="GO_Central"/>
</dbReference>
<dbReference type="GO" id="GO:0005634">
    <property type="term" value="C:nucleus"/>
    <property type="evidence" value="ECO:0000250"/>
    <property type="project" value="UniProtKB"/>
</dbReference>
<dbReference type="GO" id="GO:0019005">
    <property type="term" value="C:SCF ubiquitin ligase complex"/>
    <property type="evidence" value="ECO:0000250"/>
    <property type="project" value="UniProtKB"/>
</dbReference>
<dbReference type="GO" id="GO:0003779">
    <property type="term" value="F:actin binding"/>
    <property type="evidence" value="ECO:0007669"/>
    <property type="project" value="UniProtKB-KW"/>
</dbReference>
<dbReference type="GO" id="GO:0016567">
    <property type="term" value="P:protein ubiquitination"/>
    <property type="evidence" value="ECO:0000250"/>
    <property type="project" value="UniProtKB"/>
</dbReference>
<dbReference type="Gene3D" id="1.20.1280.50">
    <property type="match status" value="1"/>
</dbReference>
<dbReference type="InterPro" id="IPR036047">
    <property type="entry name" value="F-box-like_dom_sf"/>
</dbReference>
<dbReference type="InterPro" id="IPR040394">
    <property type="entry name" value="FBX25/32"/>
</dbReference>
<dbReference type="PANTHER" id="PTHR13123:SF8">
    <property type="entry name" value="F-BOX ONLY PROTEIN 25"/>
    <property type="match status" value="1"/>
</dbReference>
<dbReference type="PANTHER" id="PTHR13123">
    <property type="entry name" value="LD30288P"/>
    <property type="match status" value="1"/>
</dbReference>
<dbReference type="SUPFAM" id="SSF81383">
    <property type="entry name" value="F-box domain"/>
    <property type="match status" value="1"/>
</dbReference>
<gene>
    <name type="primary">FBXO25</name>
</gene>
<feature type="chain" id="PRO_0000284974" description="F-box only protein 25">
    <location>
        <begin position="1"/>
        <end position="357"/>
    </location>
</feature>
<feature type="domain" description="F-box">
    <location>
        <begin position="225"/>
        <end position="273"/>
    </location>
</feature>
<feature type="region of interest" description="Interaction with beta-actin" evidence="1">
    <location>
        <begin position="1"/>
        <end position="83"/>
    </location>
</feature>
<evidence type="ECO:0000250" key="1"/>
<accession>Q1RMS8</accession>
<protein>
    <recommendedName>
        <fullName>F-box only protein 25</fullName>
    </recommendedName>
</protein>
<comment type="function">
    <text evidence="1">Substrate-recognition component of the SCF (SKP1-CUL1-F-box protein)-type E3 ubiquitin ligase complex. May play a role in accumulation of expanded polyglutamine (polyQ) protein huntingtin (HTT) (By similarity).</text>
</comment>
<comment type="pathway">
    <text>Protein modification; protein ubiquitination.</text>
</comment>
<comment type="subunit">
    <text evidence="1">Part of a SCF (SKP1-cullin-F-box) protein ligase complex consisting of FBXO25, SKP1, CUL1 and RBX1. Interacts directly with SKP1 and CUL1. Interacts (via C-terminus) with beta-actin (via N-terminus).</text>
</comment>
<comment type="subcellular location">
    <subcellularLocation>
        <location evidence="1">Nucleus</location>
    </subcellularLocation>
    <text evidence="1">In the nucleus, associates with subnuclear dot-like structure.</text>
</comment>
<comment type="domain">
    <text evidence="1">The F-box is necessary for the interaction with SKP1.</text>
</comment>
<organism>
    <name type="scientific">Bos taurus</name>
    <name type="common">Bovine</name>
    <dbReference type="NCBI Taxonomy" id="9913"/>
    <lineage>
        <taxon>Eukaryota</taxon>
        <taxon>Metazoa</taxon>
        <taxon>Chordata</taxon>
        <taxon>Craniata</taxon>
        <taxon>Vertebrata</taxon>
        <taxon>Euteleostomi</taxon>
        <taxon>Mammalia</taxon>
        <taxon>Eutheria</taxon>
        <taxon>Laurasiatheria</taxon>
        <taxon>Artiodactyla</taxon>
        <taxon>Ruminantia</taxon>
        <taxon>Pecora</taxon>
        <taxon>Bovidae</taxon>
        <taxon>Bovinae</taxon>
        <taxon>Bos</taxon>
    </lineage>
</organism>
<reference key="1">
    <citation type="submission" date="2006-04" db="EMBL/GenBank/DDBJ databases">
        <authorList>
            <consortium name="NIH - Mammalian Gene Collection (MGC) project"/>
        </authorList>
    </citation>
    <scope>NUCLEOTIDE SEQUENCE [LARGE SCALE MRNA]</scope>
    <source>
        <strain>Hereford</strain>
        <tissue>Uterus</tissue>
    </source>
</reference>
<proteinExistence type="evidence at transcript level"/>
<name>FBX25_BOVIN</name>
<sequence>MPFLGQDWRSPGWSWMKTEDGWKRCDAWSQELEGENSQCDIGHGIILNSEDEEIFSNEEHEFASKKRKKDHFRNDTNTQCFYRENWIYVHKESTRERHGYCTLGEAFNRLDFSSAIQDIRRFNYVVRLLQLIAKSQLTSLSGVAQKNYFNILDKIVQKVLGDHQNPRLIKDLLQDLSSTLCILIRGVGKSVLVGNINIWICRLETVLRWQQQLQNLQMTEVDSGLTLSDLPVHMLSNILYRFSDGWDIVTLGQVTPTLSALSEDRQLWKKLCQYHFGEKQFCRHLILSEKGHVEWKLMYFALQKHYPTKEQYGDTLHFCRHCSILFWKDSGHPCTAADPDSCFTPVSPQHFIDLFKY</sequence>
<keyword id="KW-0009">Actin-binding</keyword>
<keyword id="KW-0539">Nucleus</keyword>
<keyword id="KW-1185">Reference proteome</keyword>
<keyword id="KW-0833">Ubl conjugation pathway</keyword>